<sequence>MSSTTAIRLAARPSSWRGTGALSSGRPLSQFASLPRRSINPSISGMRQGTLRLSIHDGRLFFSTQPPKDTPENMNNKETGSSNVIFMPPPPPAQTEAPSSGSAKEDTTDATNKSETETPTAASESETSKSSESDVSSASTSDSANSSETTTTTSETTPENGNNDTAQPELPSRTEAHRARLSARFSTIMDNFQTRLLTATQTLNDLTGYSAIEQIKRKNAELEVAHGQAQSRLRDARHNYKSLTMHRASTQREVTTLLARKDTWNPLDLERFTSLYRLDHELEAQVAQAAQELTEAETEESRLSADLNAGILKRYHEEQIWSDRIRRQSTWGTWGLMGVNVLLFLVLQFVAEPWRRKRLMKGIAENEKGVIDEVRHELGQVRQALEASGLRETAHLARLMEQEREIQALASTSSSSGDPQGGGGRTEGEVEMDIGAEFMAAAAEEAAEEAATAQQQQQQQQQQQQQQHHQTPETQEEPQQPPLTWKQTAQKWQQTLSDPQQIKAAVVDLYSDRRIDLKMRDVSLLALESAATGAAVVASVAFFVLRSSGSGKA</sequence>
<accession>Q7S9I1</accession>
<evidence type="ECO:0000250" key="1"/>
<evidence type="ECO:0000255" key="2"/>
<evidence type="ECO:0000256" key="3">
    <source>
        <dbReference type="SAM" id="MobiDB-lite"/>
    </source>
</evidence>
<evidence type="ECO:0000305" key="4"/>
<reference key="1">
    <citation type="journal article" date="2003" name="Nature">
        <title>The genome sequence of the filamentous fungus Neurospora crassa.</title>
        <authorList>
            <person name="Galagan J.E."/>
            <person name="Calvo S.E."/>
            <person name="Borkovich K.A."/>
            <person name="Selker E.U."/>
            <person name="Read N.D."/>
            <person name="Jaffe D.B."/>
            <person name="FitzHugh W."/>
            <person name="Ma L.-J."/>
            <person name="Smirnov S."/>
            <person name="Purcell S."/>
            <person name="Rehman B."/>
            <person name="Elkins T."/>
            <person name="Engels R."/>
            <person name="Wang S."/>
            <person name="Nielsen C.B."/>
            <person name="Butler J."/>
            <person name="Endrizzi M."/>
            <person name="Qui D."/>
            <person name="Ianakiev P."/>
            <person name="Bell-Pedersen D."/>
            <person name="Nelson M.A."/>
            <person name="Werner-Washburne M."/>
            <person name="Selitrennikoff C.P."/>
            <person name="Kinsey J.A."/>
            <person name="Braun E.L."/>
            <person name="Zelter A."/>
            <person name="Schulte U."/>
            <person name="Kothe G.O."/>
            <person name="Jedd G."/>
            <person name="Mewes H.-W."/>
            <person name="Staben C."/>
            <person name="Marcotte E."/>
            <person name="Greenberg D."/>
            <person name="Roy A."/>
            <person name="Foley K."/>
            <person name="Naylor J."/>
            <person name="Stange-Thomann N."/>
            <person name="Barrett R."/>
            <person name="Gnerre S."/>
            <person name="Kamal M."/>
            <person name="Kamvysselis M."/>
            <person name="Mauceli E.W."/>
            <person name="Bielke C."/>
            <person name="Rudd S."/>
            <person name="Frishman D."/>
            <person name="Krystofova S."/>
            <person name="Rasmussen C."/>
            <person name="Metzenberg R.L."/>
            <person name="Perkins D.D."/>
            <person name="Kroken S."/>
            <person name="Cogoni C."/>
            <person name="Macino G."/>
            <person name="Catcheside D.E.A."/>
            <person name="Li W."/>
            <person name="Pratt R.J."/>
            <person name="Osmani S.A."/>
            <person name="DeSouza C.P.C."/>
            <person name="Glass N.L."/>
            <person name="Orbach M.J."/>
            <person name="Berglund J.A."/>
            <person name="Voelker R."/>
            <person name="Yarden O."/>
            <person name="Plamann M."/>
            <person name="Seiler S."/>
            <person name="Dunlap J.C."/>
            <person name="Radford A."/>
            <person name="Aramayo R."/>
            <person name="Natvig D.O."/>
            <person name="Alex L.A."/>
            <person name="Mannhaupt G."/>
            <person name="Ebbole D.J."/>
            <person name="Freitag M."/>
            <person name="Paulsen I."/>
            <person name="Sachs M.S."/>
            <person name="Lander E.S."/>
            <person name="Nusbaum C."/>
            <person name="Birren B.W."/>
        </authorList>
    </citation>
    <scope>NUCLEOTIDE SEQUENCE [LARGE SCALE GENOMIC DNA]</scope>
    <source>
        <strain>ATCC 24698 / 74-OR23-1A / CBS 708.71 / DSM 1257 / FGSC 987</strain>
    </source>
</reference>
<comment type="function">
    <text evidence="1">Required for the maintenance of the structure of the mitochondrial inner membrane. Involved in mitochondrial morphology. Causes growth arrest when highly overexpressed (By similarity).</text>
</comment>
<comment type="subunit">
    <text evidence="1">Homooligomer.</text>
</comment>
<comment type="subcellular location">
    <subcellularLocation>
        <location evidence="1">Mitochondrion inner membrane</location>
        <topology evidence="1">Multi-pass membrane protein</topology>
    </subcellularLocation>
</comment>
<comment type="similarity">
    <text evidence="4">Belongs to the SHE9 family.</text>
</comment>
<organism>
    <name type="scientific">Neurospora crassa (strain ATCC 24698 / 74-OR23-1A / CBS 708.71 / DSM 1257 / FGSC 987)</name>
    <dbReference type="NCBI Taxonomy" id="367110"/>
    <lineage>
        <taxon>Eukaryota</taxon>
        <taxon>Fungi</taxon>
        <taxon>Dikarya</taxon>
        <taxon>Ascomycota</taxon>
        <taxon>Pezizomycotina</taxon>
        <taxon>Sordariomycetes</taxon>
        <taxon>Sordariomycetidae</taxon>
        <taxon>Sordariales</taxon>
        <taxon>Sordariaceae</taxon>
        <taxon>Neurospora</taxon>
    </lineage>
</organism>
<gene>
    <name type="primary">she-9</name>
    <name type="ORF">NCU06546</name>
</gene>
<protein>
    <recommendedName>
        <fullName>Sensitive to high expression protein 9 homolog, mitochondrial</fullName>
    </recommendedName>
</protein>
<feature type="transit peptide" description="Mitochondrion" evidence="2">
    <location>
        <begin position="1"/>
        <end status="unknown"/>
    </location>
</feature>
<feature type="chain" id="PRO_0000351061" description="Sensitive to high expression protein 9 homolog, mitochondrial">
    <location>
        <begin status="unknown"/>
        <end position="553"/>
    </location>
</feature>
<feature type="topological domain" description="Mitochondrial matrix" evidence="2">
    <location>
        <begin status="unknown"/>
        <end position="330"/>
    </location>
</feature>
<feature type="transmembrane region" description="Helical" evidence="2">
    <location>
        <begin position="331"/>
        <end position="351"/>
    </location>
</feature>
<feature type="topological domain" description="Mitochondrial intermembrane" evidence="2">
    <location>
        <begin position="352"/>
        <end position="523"/>
    </location>
</feature>
<feature type="transmembrane region" description="Helical" evidence="2">
    <location>
        <begin position="524"/>
        <end position="544"/>
    </location>
</feature>
<feature type="topological domain" description="Mitochondrial matrix" evidence="2">
    <location>
        <begin position="545"/>
        <end position="553"/>
    </location>
</feature>
<feature type="region of interest" description="Disordered" evidence="3">
    <location>
        <begin position="61"/>
        <end position="174"/>
    </location>
</feature>
<feature type="region of interest" description="Disordered" evidence="3">
    <location>
        <begin position="408"/>
        <end position="428"/>
    </location>
</feature>
<feature type="region of interest" description="Disordered" evidence="3">
    <location>
        <begin position="443"/>
        <end position="497"/>
    </location>
</feature>
<feature type="coiled-coil region" evidence="2">
    <location>
        <begin position="210"/>
        <end position="241"/>
    </location>
</feature>
<feature type="coiled-coil region" evidence="2">
    <location>
        <begin position="277"/>
        <end position="309"/>
    </location>
</feature>
<feature type="compositionally biased region" description="Polar residues" evidence="3">
    <location>
        <begin position="62"/>
        <end position="84"/>
    </location>
</feature>
<feature type="compositionally biased region" description="Basic and acidic residues" evidence="3">
    <location>
        <begin position="103"/>
        <end position="116"/>
    </location>
</feature>
<feature type="compositionally biased region" description="Low complexity" evidence="3">
    <location>
        <begin position="133"/>
        <end position="160"/>
    </location>
</feature>
<feature type="compositionally biased region" description="Low complexity" evidence="3">
    <location>
        <begin position="443"/>
        <end position="473"/>
    </location>
</feature>
<feature type="compositionally biased region" description="Low complexity" evidence="3">
    <location>
        <begin position="484"/>
        <end position="495"/>
    </location>
</feature>
<keyword id="KW-0175">Coiled coil</keyword>
<keyword id="KW-0472">Membrane</keyword>
<keyword id="KW-0496">Mitochondrion</keyword>
<keyword id="KW-0999">Mitochondrion inner membrane</keyword>
<keyword id="KW-1185">Reference proteome</keyword>
<keyword id="KW-0809">Transit peptide</keyword>
<keyword id="KW-0812">Transmembrane</keyword>
<keyword id="KW-1133">Transmembrane helix</keyword>
<dbReference type="EMBL" id="CM002239">
    <property type="protein sequence ID" value="EAA33017.1"/>
    <property type="molecule type" value="Genomic_DNA"/>
</dbReference>
<dbReference type="RefSeq" id="XP_962253.1">
    <property type="nucleotide sequence ID" value="XM_957160.2"/>
</dbReference>
<dbReference type="PaxDb" id="5141-EFNCRP00000006295"/>
<dbReference type="EnsemblFungi" id="EAA33017">
    <property type="protein sequence ID" value="EAA33017"/>
    <property type="gene ID" value="NCU06546"/>
</dbReference>
<dbReference type="GeneID" id="3878411"/>
<dbReference type="KEGG" id="ncr:NCU06546"/>
<dbReference type="VEuPathDB" id="FungiDB:NCU06546"/>
<dbReference type="HOGENOM" id="CLU_025632_1_0_1"/>
<dbReference type="InParanoid" id="Q7S9I1"/>
<dbReference type="OrthoDB" id="5595506at2759"/>
<dbReference type="Proteomes" id="UP000001805">
    <property type="component" value="Chromosome 4, Linkage Group IV"/>
</dbReference>
<dbReference type="GO" id="GO:0005743">
    <property type="term" value="C:mitochondrial inner membrane"/>
    <property type="evidence" value="ECO:0000318"/>
    <property type="project" value="GO_Central"/>
</dbReference>
<dbReference type="GO" id="GO:0007007">
    <property type="term" value="P:inner mitochondrial membrane organization"/>
    <property type="evidence" value="ECO:0000318"/>
    <property type="project" value="GO_Central"/>
</dbReference>
<dbReference type="InterPro" id="IPR008839">
    <property type="entry name" value="MDM33_fungi"/>
</dbReference>
<dbReference type="PANTHER" id="PTHR31961">
    <property type="entry name" value="SENSITIVE TO HIGH EXPRESSION PROTEIN 9, MITOCHONDRIAL"/>
    <property type="match status" value="1"/>
</dbReference>
<dbReference type="PANTHER" id="PTHR31961:SF3">
    <property type="entry name" value="SENSITIVE TO HIGH EXPRESSION PROTEIN 9, MITOCHONDRIAL"/>
    <property type="match status" value="1"/>
</dbReference>
<dbReference type="Pfam" id="PF05546">
    <property type="entry name" value="She9_MDM33"/>
    <property type="match status" value="1"/>
</dbReference>
<name>SHE9_NEUCR</name>
<proteinExistence type="inferred from homology"/>